<evidence type="ECO:0000255" key="1">
    <source>
        <dbReference type="HAMAP-Rule" id="MF_00022"/>
    </source>
</evidence>
<evidence type="ECO:0000305" key="2"/>
<dbReference type="EC" id="6.1.1.17" evidence="1"/>
<dbReference type="EMBL" id="CP000030">
    <property type="protein sequence ID" value="AAV86712.1"/>
    <property type="status" value="ALT_INIT"/>
    <property type="molecule type" value="Genomic_DNA"/>
</dbReference>
<dbReference type="SMR" id="Q5PAG8"/>
<dbReference type="KEGG" id="ama:AM775"/>
<dbReference type="PATRIC" id="fig|320483.3.peg.663"/>
<dbReference type="HOGENOM" id="CLU_015768_6_0_5"/>
<dbReference type="GO" id="GO:0005829">
    <property type="term" value="C:cytosol"/>
    <property type="evidence" value="ECO:0007669"/>
    <property type="project" value="TreeGrafter"/>
</dbReference>
<dbReference type="GO" id="GO:0005524">
    <property type="term" value="F:ATP binding"/>
    <property type="evidence" value="ECO:0007669"/>
    <property type="project" value="UniProtKB-UniRule"/>
</dbReference>
<dbReference type="GO" id="GO:0004818">
    <property type="term" value="F:glutamate-tRNA ligase activity"/>
    <property type="evidence" value="ECO:0007669"/>
    <property type="project" value="UniProtKB-UniRule"/>
</dbReference>
<dbReference type="GO" id="GO:0000049">
    <property type="term" value="F:tRNA binding"/>
    <property type="evidence" value="ECO:0007669"/>
    <property type="project" value="InterPro"/>
</dbReference>
<dbReference type="GO" id="GO:0008270">
    <property type="term" value="F:zinc ion binding"/>
    <property type="evidence" value="ECO:0007669"/>
    <property type="project" value="UniProtKB-UniRule"/>
</dbReference>
<dbReference type="GO" id="GO:0006424">
    <property type="term" value="P:glutamyl-tRNA aminoacylation"/>
    <property type="evidence" value="ECO:0007669"/>
    <property type="project" value="UniProtKB-UniRule"/>
</dbReference>
<dbReference type="CDD" id="cd00808">
    <property type="entry name" value="GluRS_core"/>
    <property type="match status" value="1"/>
</dbReference>
<dbReference type="FunFam" id="3.40.50.620:FF:000007">
    <property type="entry name" value="Glutamate--tRNA ligase"/>
    <property type="match status" value="1"/>
</dbReference>
<dbReference type="Gene3D" id="1.10.10.350">
    <property type="match status" value="1"/>
</dbReference>
<dbReference type="Gene3D" id="3.40.50.620">
    <property type="entry name" value="HUPs"/>
    <property type="match status" value="1"/>
</dbReference>
<dbReference type="HAMAP" id="MF_00022">
    <property type="entry name" value="Glu_tRNA_synth_type1"/>
    <property type="match status" value="1"/>
</dbReference>
<dbReference type="InterPro" id="IPR045462">
    <property type="entry name" value="aa-tRNA-synth_I_cd-bd"/>
</dbReference>
<dbReference type="InterPro" id="IPR020751">
    <property type="entry name" value="aa-tRNA-synth_I_codon-bd_sub2"/>
</dbReference>
<dbReference type="InterPro" id="IPR001412">
    <property type="entry name" value="aa-tRNA-synth_I_CS"/>
</dbReference>
<dbReference type="InterPro" id="IPR008925">
    <property type="entry name" value="aa_tRNA-synth_I_cd-bd_sf"/>
</dbReference>
<dbReference type="InterPro" id="IPR004527">
    <property type="entry name" value="Glu-tRNA-ligase_bac/mito"/>
</dbReference>
<dbReference type="InterPro" id="IPR000924">
    <property type="entry name" value="Glu/Gln-tRNA-synth"/>
</dbReference>
<dbReference type="InterPro" id="IPR020058">
    <property type="entry name" value="Glu/Gln-tRNA-synth_Ib_cat-dom"/>
</dbReference>
<dbReference type="InterPro" id="IPR049940">
    <property type="entry name" value="GluQ/Sye"/>
</dbReference>
<dbReference type="InterPro" id="IPR033910">
    <property type="entry name" value="GluRS_core"/>
</dbReference>
<dbReference type="InterPro" id="IPR014729">
    <property type="entry name" value="Rossmann-like_a/b/a_fold"/>
</dbReference>
<dbReference type="NCBIfam" id="TIGR00464">
    <property type="entry name" value="gltX_bact"/>
    <property type="match status" value="1"/>
</dbReference>
<dbReference type="PANTHER" id="PTHR43311">
    <property type="entry name" value="GLUTAMATE--TRNA LIGASE"/>
    <property type="match status" value="1"/>
</dbReference>
<dbReference type="PANTHER" id="PTHR43311:SF2">
    <property type="entry name" value="GLUTAMATE--TRNA LIGASE, MITOCHONDRIAL-RELATED"/>
    <property type="match status" value="1"/>
</dbReference>
<dbReference type="Pfam" id="PF19269">
    <property type="entry name" value="Anticodon_2"/>
    <property type="match status" value="1"/>
</dbReference>
<dbReference type="Pfam" id="PF00749">
    <property type="entry name" value="tRNA-synt_1c"/>
    <property type="match status" value="1"/>
</dbReference>
<dbReference type="PRINTS" id="PR00987">
    <property type="entry name" value="TRNASYNTHGLU"/>
</dbReference>
<dbReference type="SUPFAM" id="SSF48163">
    <property type="entry name" value="An anticodon-binding domain of class I aminoacyl-tRNA synthetases"/>
    <property type="match status" value="1"/>
</dbReference>
<dbReference type="SUPFAM" id="SSF52374">
    <property type="entry name" value="Nucleotidylyl transferase"/>
    <property type="match status" value="1"/>
</dbReference>
<dbReference type="PROSITE" id="PS00178">
    <property type="entry name" value="AA_TRNA_LIGASE_I"/>
    <property type="match status" value="1"/>
</dbReference>
<keyword id="KW-0030">Aminoacyl-tRNA synthetase</keyword>
<keyword id="KW-0067">ATP-binding</keyword>
<keyword id="KW-0963">Cytoplasm</keyword>
<keyword id="KW-0436">Ligase</keyword>
<keyword id="KW-0547">Nucleotide-binding</keyword>
<keyword id="KW-0648">Protein biosynthesis</keyword>
<name>SYE2_ANAMM</name>
<comment type="function">
    <text evidence="1">Catalyzes the attachment of glutamate to tRNA(Glu) in a two-step reaction: glutamate is first activated by ATP to form Glu-AMP and then transferred to the acceptor end of tRNA(Glu).</text>
</comment>
<comment type="catalytic activity">
    <reaction evidence="1">
        <text>tRNA(Glu) + L-glutamate + ATP = L-glutamyl-tRNA(Glu) + AMP + diphosphate</text>
        <dbReference type="Rhea" id="RHEA:23540"/>
        <dbReference type="Rhea" id="RHEA-COMP:9663"/>
        <dbReference type="Rhea" id="RHEA-COMP:9680"/>
        <dbReference type="ChEBI" id="CHEBI:29985"/>
        <dbReference type="ChEBI" id="CHEBI:30616"/>
        <dbReference type="ChEBI" id="CHEBI:33019"/>
        <dbReference type="ChEBI" id="CHEBI:78442"/>
        <dbReference type="ChEBI" id="CHEBI:78520"/>
        <dbReference type="ChEBI" id="CHEBI:456215"/>
        <dbReference type="EC" id="6.1.1.17"/>
    </reaction>
</comment>
<comment type="subunit">
    <text evidence="1">Monomer.</text>
</comment>
<comment type="subcellular location">
    <subcellularLocation>
        <location evidence="1">Cytoplasm</location>
    </subcellularLocation>
</comment>
<comment type="similarity">
    <text evidence="1">Belongs to the class-I aminoacyl-tRNA synthetase family. Glutamate--tRNA ligase type 1 subfamily.</text>
</comment>
<comment type="sequence caution" evidence="2">
    <conflict type="erroneous initiation">
        <sequence resource="EMBL-CDS" id="AAV86712"/>
    </conflict>
</comment>
<accession>Q5PAG8</accession>
<proteinExistence type="inferred from homology"/>
<reference key="1">
    <citation type="journal article" date="2005" name="Proc. Natl. Acad. Sci. U.S.A.">
        <title>Complete genome sequencing of Anaplasma marginale reveals that the surface is skewed to two superfamilies of outer membrane proteins.</title>
        <authorList>
            <person name="Brayton K.A."/>
            <person name="Kappmeyer L.S."/>
            <person name="Herndon D.R."/>
            <person name="Dark M.J."/>
            <person name="Tibbals D.L."/>
            <person name="Palmer G.H."/>
            <person name="McGuire T.C."/>
            <person name="Knowles D.P. Jr."/>
        </authorList>
    </citation>
    <scope>NUCLEOTIDE SEQUENCE [LARGE SCALE GENOMIC DNA]</scope>
    <source>
        <strain>St. Maries</strain>
    </source>
</reference>
<organism>
    <name type="scientific">Anaplasma marginale (strain St. Maries)</name>
    <dbReference type="NCBI Taxonomy" id="234826"/>
    <lineage>
        <taxon>Bacteria</taxon>
        <taxon>Pseudomonadati</taxon>
        <taxon>Pseudomonadota</taxon>
        <taxon>Alphaproteobacteria</taxon>
        <taxon>Rickettsiales</taxon>
        <taxon>Anaplasmataceae</taxon>
        <taxon>Anaplasma</taxon>
    </lineage>
</organism>
<feature type="chain" id="PRO_0000119493" description="Glutamate--tRNA ligase 2">
    <location>
        <begin position="1"/>
        <end position="466"/>
    </location>
</feature>
<feature type="short sequence motif" description="'HIGH' region" evidence="1">
    <location>
        <begin position="9"/>
        <end position="19"/>
    </location>
</feature>
<feature type="short sequence motif" description="'KMSKS' region" evidence="1">
    <location>
        <begin position="236"/>
        <end position="240"/>
    </location>
</feature>
<feature type="binding site" evidence="1">
    <location>
        <position position="239"/>
    </location>
    <ligand>
        <name>ATP</name>
        <dbReference type="ChEBI" id="CHEBI:30616"/>
    </ligand>
</feature>
<gene>
    <name evidence="1" type="primary">gltX2</name>
    <name type="ordered locus">AM775</name>
</gene>
<sequence>MRVITRFAPSPTGSLHLGGARTALFNWLFARRHGGQFLLRMEDTDQERSSETVAQSIIEDMAWLGLHHDQDVVIQSARRERHTQVAEELLARGKAYYCYCSEDDIAAEKLRHENEGKHYRHHCPSRDANHAQSGTAGVLRLKSPENREIKFTDGVYGEISVSSEQIDDMVILRSNGHPTYLLAVVVDDHDMCITHIIRGSDHITNTIKQMLLAEAMGWDNPQFCHIPLIHDEGGAKLSKRNRAPGVHEYRELGFLPEAVCNYLLRMGWSHKDEEIITMQSATQLFSIEKIGTSHSCLDSKKLLFLNHHYMNQKTELEILGLLLPFLEQELGHTVAETKLARLSLGVKKLMERAKTLADLARDSVFYVQNIPISVDDDAKQVILKSSELLAKLVGAMSQIEPKTWTKDFLSSYIKEWTKSNDVVISDVYHLLRAAIAGRLSTPSISEVMEILGQEECISRLRFFLNS</sequence>
<protein>
    <recommendedName>
        <fullName evidence="1">Glutamate--tRNA ligase 2</fullName>
        <ecNumber evidence="1">6.1.1.17</ecNumber>
    </recommendedName>
    <alternativeName>
        <fullName evidence="1">Glutamyl-tRNA synthetase 2</fullName>
        <shortName evidence="1">GluRS 2</shortName>
    </alternativeName>
</protein>